<reference key="1">
    <citation type="journal article" date="2009" name="J. Bacteriol.">
        <title>Complete genome sequence of the extremophilic Bacillus cereus strain Q1 with industrial applications.</title>
        <authorList>
            <person name="Xiong Z."/>
            <person name="Jiang Y."/>
            <person name="Qi D."/>
            <person name="Lu H."/>
            <person name="Yang F."/>
            <person name="Yang J."/>
            <person name="Chen L."/>
            <person name="Sun L."/>
            <person name="Xu X."/>
            <person name="Xue Y."/>
            <person name="Zhu Y."/>
            <person name="Jin Q."/>
        </authorList>
    </citation>
    <scope>NUCLEOTIDE SEQUENCE [LARGE SCALE GENOMIC DNA]</scope>
    <source>
        <strain>Q1</strain>
    </source>
</reference>
<sequence length="317" mass="36949">MIMRFGYVSHAMALWDCSPAKTMTFTSFQKLSKQEREDKLYDVTRQNLEHTIRILHYNIAHEIPLYRLSSSIVPLATHPEVEFDYIGLFTPLWRTIGALIKEHNLRVSFHPNQFTLFTSDKPHITTNAITDMTYHYKVLDAIGIADSSYINIHVGGAYGNKEKAVERFHDNIKKLPAHIKRRMTLENDDKTYTTAETLSICQKEKIPFVFDYHHHMANLCEEPLEELLPAIFETWSHTNIVPKVHISSPKSKKEFRAHAEYIDLEFIKPFLHVAKKINHNFDIMIESKQKDLAMLQFIHELSSIRGVKRISSSTLQW</sequence>
<name>UVSE_BACCQ</name>
<proteinExistence type="inferred from homology"/>
<feature type="chain" id="PRO_1000197854" description="UV DNA damage endonuclease">
    <location>
        <begin position="1"/>
        <end position="317"/>
    </location>
</feature>
<keyword id="KW-0227">DNA damage</keyword>
<keyword id="KW-0228">DNA excision</keyword>
<keyword id="KW-0234">DNA repair</keyword>
<keyword id="KW-0255">Endonuclease</keyword>
<keyword id="KW-0378">Hydrolase</keyword>
<keyword id="KW-0540">Nuclease</keyword>
<dbReference type="EC" id="3.-.-.-" evidence="2"/>
<dbReference type="EMBL" id="CP000227">
    <property type="protein sequence ID" value="ACM15588.1"/>
    <property type="molecule type" value="Genomic_DNA"/>
</dbReference>
<dbReference type="SMR" id="B9IRY0"/>
<dbReference type="KEGG" id="bcq:BCQ_5188"/>
<dbReference type="HOGENOM" id="CLU_017168_0_1_9"/>
<dbReference type="Proteomes" id="UP000000441">
    <property type="component" value="Chromosome"/>
</dbReference>
<dbReference type="GO" id="GO:0004519">
    <property type="term" value="F:endonuclease activity"/>
    <property type="evidence" value="ECO:0007669"/>
    <property type="project" value="UniProtKB-UniRule"/>
</dbReference>
<dbReference type="GO" id="GO:0006289">
    <property type="term" value="P:nucleotide-excision repair"/>
    <property type="evidence" value="ECO:0007669"/>
    <property type="project" value="InterPro"/>
</dbReference>
<dbReference type="GO" id="GO:0006290">
    <property type="term" value="P:pyrimidine dimer repair"/>
    <property type="evidence" value="ECO:0007669"/>
    <property type="project" value="UniProtKB-UniRule"/>
</dbReference>
<dbReference type="GO" id="GO:0009411">
    <property type="term" value="P:response to UV"/>
    <property type="evidence" value="ECO:0007669"/>
    <property type="project" value="InterPro"/>
</dbReference>
<dbReference type="Gene3D" id="3.20.20.150">
    <property type="entry name" value="Divalent-metal-dependent TIM barrel enzymes"/>
    <property type="match status" value="1"/>
</dbReference>
<dbReference type="HAMAP" id="MF_00606">
    <property type="entry name" value="UV_endonuclease"/>
    <property type="match status" value="1"/>
</dbReference>
<dbReference type="InterPro" id="IPR004601">
    <property type="entry name" value="UvdE"/>
</dbReference>
<dbReference type="InterPro" id="IPR023520">
    <property type="entry name" value="UvdE_bac"/>
</dbReference>
<dbReference type="InterPro" id="IPR036237">
    <property type="entry name" value="Xyl_isomerase-like_sf"/>
</dbReference>
<dbReference type="NCBIfam" id="TIGR00629">
    <property type="entry name" value="uvde"/>
    <property type="match status" value="1"/>
</dbReference>
<dbReference type="PANTHER" id="PTHR31290">
    <property type="entry name" value="UV-DAMAGE ENDONUCLEASE"/>
    <property type="match status" value="1"/>
</dbReference>
<dbReference type="PANTHER" id="PTHR31290:SF5">
    <property type="entry name" value="UV-DAMAGE ENDONUCLEASE"/>
    <property type="match status" value="1"/>
</dbReference>
<dbReference type="Pfam" id="PF03851">
    <property type="entry name" value="UvdE"/>
    <property type="match status" value="1"/>
</dbReference>
<dbReference type="SUPFAM" id="SSF51658">
    <property type="entry name" value="Xylose isomerase-like"/>
    <property type="match status" value="1"/>
</dbReference>
<accession>B9IRY0</accession>
<gene>
    <name evidence="2" type="primary">uvsE</name>
    <name type="ordered locus">BCQ_5188</name>
</gene>
<protein>
    <recommendedName>
        <fullName evidence="2">UV DNA damage endonuclease</fullName>
        <shortName evidence="2">UV-endonuclease</shortName>
        <shortName evidence="2">UVED</shortName>
        <ecNumber evidence="2">3.-.-.-</ecNumber>
    </recommendedName>
</protein>
<comment type="function">
    <text evidence="1">Component in a DNA repair pathway. Removal of UV LIGHT damaged nucleotides. Recognizes pyrimidine dimers and cleave a phosphodiester bond immediately 5' to the lesion (By similarity).</text>
</comment>
<comment type="similarity">
    <text evidence="2">Belongs to the uve1/UvsE family.</text>
</comment>
<organism>
    <name type="scientific">Bacillus cereus (strain Q1)</name>
    <dbReference type="NCBI Taxonomy" id="361100"/>
    <lineage>
        <taxon>Bacteria</taxon>
        <taxon>Bacillati</taxon>
        <taxon>Bacillota</taxon>
        <taxon>Bacilli</taxon>
        <taxon>Bacillales</taxon>
        <taxon>Bacillaceae</taxon>
        <taxon>Bacillus</taxon>
        <taxon>Bacillus cereus group</taxon>
    </lineage>
</organism>
<evidence type="ECO:0000250" key="1"/>
<evidence type="ECO:0000255" key="2">
    <source>
        <dbReference type="HAMAP-Rule" id="MF_00606"/>
    </source>
</evidence>